<organism>
    <name type="scientific">Pelobacter propionicus (strain DSM 2379 / NBRC 103807 / OttBd1)</name>
    <dbReference type="NCBI Taxonomy" id="338966"/>
    <lineage>
        <taxon>Bacteria</taxon>
        <taxon>Pseudomonadati</taxon>
        <taxon>Thermodesulfobacteriota</taxon>
        <taxon>Desulfuromonadia</taxon>
        <taxon>Desulfuromonadales</taxon>
        <taxon>Desulfuromonadaceae</taxon>
        <taxon>Pelobacter</taxon>
    </lineage>
</organism>
<evidence type="ECO:0000255" key="1">
    <source>
        <dbReference type="HAMAP-Rule" id="MF_00012"/>
    </source>
</evidence>
<keyword id="KW-0001">2Fe-2S</keyword>
<keyword id="KW-0028">Amino-acid biosynthesis</keyword>
<keyword id="KW-0100">Branched-chain amino acid biosynthesis</keyword>
<keyword id="KW-0408">Iron</keyword>
<keyword id="KW-0411">Iron-sulfur</keyword>
<keyword id="KW-0456">Lyase</keyword>
<keyword id="KW-0460">Magnesium</keyword>
<keyword id="KW-0479">Metal-binding</keyword>
<keyword id="KW-1185">Reference proteome</keyword>
<reference key="1">
    <citation type="submission" date="2006-10" db="EMBL/GenBank/DDBJ databases">
        <title>Complete sequence of chromosome of Pelobacter propionicus DSM 2379.</title>
        <authorList>
            <consortium name="US DOE Joint Genome Institute"/>
            <person name="Copeland A."/>
            <person name="Lucas S."/>
            <person name="Lapidus A."/>
            <person name="Barry K."/>
            <person name="Detter J.C."/>
            <person name="Glavina del Rio T."/>
            <person name="Hammon N."/>
            <person name="Israni S."/>
            <person name="Dalin E."/>
            <person name="Tice H."/>
            <person name="Pitluck S."/>
            <person name="Saunders E."/>
            <person name="Brettin T."/>
            <person name="Bruce D."/>
            <person name="Han C."/>
            <person name="Tapia R."/>
            <person name="Schmutz J."/>
            <person name="Larimer F."/>
            <person name="Land M."/>
            <person name="Hauser L."/>
            <person name="Kyrpides N."/>
            <person name="Kim E."/>
            <person name="Lovley D."/>
            <person name="Richardson P."/>
        </authorList>
    </citation>
    <scope>NUCLEOTIDE SEQUENCE [LARGE SCALE GENOMIC DNA]</scope>
    <source>
        <strain>DSM 2379 / NBRC 103807 / OttBd1</strain>
    </source>
</reference>
<comment type="function">
    <text evidence="1">Functions in the biosynthesis of branched-chain amino acids. Catalyzes the dehydration of (2R,3R)-2,3-dihydroxy-3-methylpentanoate (2,3-dihydroxy-3-methylvalerate) into 2-oxo-3-methylpentanoate (2-oxo-3-methylvalerate) and of (2R)-2,3-dihydroxy-3-methylbutanoate (2,3-dihydroxyisovalerate) into 2-oxo-3-methylbutanoate (2-oxoisovalerate), the penultimate precursor to L-isoleucine and L-valine, respectively.</text>
</comment>
<comment type="catalytic activity">
    <reaction evidence="1">
        <text>(2R)-2,3-dihydroxy-3-methylbutanoate = 3-methyl-2-oxobutanoate + H2O</text>
        <dbReference type="Rhea" id="RHEA:24809"/>
        <dbReference type="ChEBI" id="CHEBI:11851"/>
        <dbReference type="ChEBI" id="CHEBI:15377"/>
        <dbReference type="ChEBI" id="CHEBI:49072"/>
        <dbReference type="EC" id="4.2.1.9"/>
    </reaction>
    <physiologicalReaction direction="left-to-right" evidence="1">
        <dbReference type="Rhea" id="RHEA:24810"/>
    </physiologicalReaction>
</comment>
<comment type="catalytic activity">
    <reaction evidence="1">
        <text>(2R,3R)-2,3-dihydroxy-3-methylpentanoate = (S)-3-methyl-2-oxopentanoate + H2O</text>
        <dbReference type="Rhea" id="RHEA:27694"/>
        <dbReference type="ChEBI" id="CHEBI:15377"/>
        <dbReference type="ChEBI" id="CHEBI:35146"/>
        <dbReference type="ChEBI" id="CHEBI:49258"/>
        <dbReference type="EC" id="4.2.1.9"/>
    </reaction>
    <physiologicalReaction direction="left-to-right" evidence="1">
        <dbReference type="Rhea" id="RHEA:27695"/>
    </physiologicalReaction>
</comment>
<comment type="cofactor">
    <cofactor evidence="1">
        <name>[2Fe-2S] cluster</name>
        <dbReference type="ChEBI" id="CHEBI:190135"/>
    </cofactor>
    <text evidence="1">Binds 1 [2Fe-2S] cluster per subunit. This cluster acts as a Lewis acid cofactor.</text>
</comment>
<comment type="cofactor">
    <cofactor evidence="1">
        <name>Mg(2+)</name>
        <dbReference type="ChEBI" id="CHEBI:18420"/>
    </cofactor>
</comment>
<comment type="pathway">
    <text evidence="1">Amino-acid biosynthesis; L-isoleucine biosynthesis; L-isoleucine from 2-oxobutanoate: step 3/4.</text>
</comment>
<comment type="pathway">
    <text evidence="1">Amino-acid biosynthesis; L-valine biosynthesis; L-valine from pyruvate: step 3/4.</text>
</comment>
<comment type="subunit">
    <text evidence="1">Homodimer.</text>
</comment>
<comment type="similarity">
    <text evidence="1">Belongs to the IlvD/Edd family.</text>
</comment>
<feature type="chain" id="PRO_1000001026" description="Dihydroxy-acid dehydratase">
    <location>
        <begin position="1"/>
        <end position="553"/>
    </location>
</feature>
<feature type="active site" description="Proton acceptor" evidence="1">
    <location>
        <position position="467"/>
    </location>
</feature>
<feature type="binding site" evidence="1">
    <location>
        <position position="78"/>
    </location>
    <ligand>
        <name>Mg(2+)</name>
        <dbReference type="ChEBI" id="CHEBI:18420"/>
    </ligand>
</feature>
<feature type="binding site" evidence="1">
    <location>
        <position position="119"/>
    </location>
    <ligand>
        <name>[2Fe-2S] cluster</name>
        <dbReference type="ChEBI" id="CHEBI:190135"/>
    </ligand>
</feature>
<feature type="binding site" evidence="1">
    <location>
        <position position="120"/>
    </location>
    <ligand>
        <name>Mg(2+)</name>
        <dbReference type="ChEBI" id="CHEBI:18420"/>
    </ligand>
</feature>
<feature type="binding site" description="via carbamate group" evidence="1">
    <location>
        <position position="121"/>
    </location>
    <ligand>
        <name>Mg(2+)</name>
        <dbReference type="ChEBI" id="CHEBI:18420"/>
    </ligand>
</feature>
<feature type="binding site" evidence="1">
    <location>
        <position position="193"/>
    </location>
    <ligand>
        <name>[2Fe-2S] cluster</name>
        <dbReference type="ChEBI" id="CHEBI:190135"/>
    </ligand>
</feature>
<feature type="binding site" evidence="1">
    <location>
        <position position="441"/>
    </location>
    <ligand>
        <name>Mg(2+)</name>
        <dbReference type="ChEBI" id="CHEBI:18420"/>
    </ligand>
</feature>
<feature type="modified residue" description="N6-carboxylysine" evidence="1">
    <location>
        <position position="121"/>
    </location>
</feature>
<gene>
    <name evidence="1" type="primary">ilvD</name>
    <name type="ordered locus">Ppro_2559</name>
</gene>
<protein>
    <recommendedName>
        <fullName evidence="1">Dihydroxy-acid dehydratase</fullName>
        <shortName evidence="1">DAD</shortName>
        <ecNumber evidence="1">4.2.1.9</ecNumber>
    </recommendedName>
</protein>
<proteinExistence type="inferred from homology"/>
<dbReference type="EC" id="4.2.1.9" evidence="1"/>
<dbReference type="EMBL" id="CP000482">
    <property type="protein sequence ID" value="ABL00164.1"/>
    <property type="molecule type" value="Genomic_DNA"/>
</dbReference>
<dbReference type="RefSeq" id="WP_011736418.1">
    <property type="nucleotide sequence ID" value="NC_008609.1"/>
</dbReference>
<dbReference type="SMR" id="A1AS43"/>
<dbReference type="STRING" id="338966.Ppro_2559"/>
<dbReference type="KEGG" id="ppd:Ppro_2559"/>
<dbReference type="eggNOG" id="COG0129">
    <property type="taxonomic scope" value="Bacteria"/>
</dbReference>
<dbReference type="HOGENOM" id="CLU_014271_4_2_7"/>
<dbReference type="OrthoDB" id="9807077at2"/>
<dbReference type="UniPathway" id="UPA00047">
    <property type="reaction ID" value="UER00057"/>
</dbReference>
<dbReference type="UniPathway" id="UPA00049">
    <property type="reaction ID" value="UER00061"/>
</dbReference>
<dbReference type="Proteomes" id="UP000006732">
    <property type="component" value="Chromosome"/>
</dbReference>
<dbReference type="GO" id="GO:0005829">
    <property type="term" value="C:cytosol"/>
    <property type="evidence" value="ECO:0007669"/>
    <property type="project" value="TreeGrafter"/>
</dbReference>
<dbReference type="GO" id="GO:0051537">
    <property type="term" value="F:2 iron, 2 sulfur cluster binding"/>
    <property type="evidence" value="ECO:0007669"/>
    <property type="project" value="UniProtKB-UniRule"/>
</dbReference>
<dbReference type="GO" id="GO:0004160">
    <property type="term" value="F:dihydroxy-acid dehydratase activity"/>
    <property type="evidence" value="ECO:0007669"/>
    <property type="project" value="UniProtKB-UniRule"/>
</dbReference>
<dbReference type="GO" id="GO:0000287">
    <property type="term" value="F:magnesium ion binding"/>
    <property type="evidence" value="ECO:0007669"/>
    <property type="project" value="UniProtKB-UniRule"/>
</dbReference>
<dbReference type="GO" id="GO:0009097">
    <property type="term" value="P:isoleucine biosynthetic process"/>
    <property type="evidence" value="ECO:0007669"/>
    <property type="project" value="UniProtKB-UniRule"/>
</dbReference>
<dbReference type="GO" id="GO:0009099">
    <property type="term" value="P:L-valine biosynthetic process"/>
    <property type="evidence" value="ECO:0007669"/>
    <property type="project" value="UniProtKB-UniRule"/>
</dbReference>
<dbReference type="FunFam" id="3.50.30.80:FF:000001">
    <property type="entry name" value="Dihydroxy-acid dehydratase"/>
    <property type="match status" value="1"/>
</dbReference>
<dbReference type="Gene3D" id="3.50.30.80">
    <property type="entry name" value="IlvD/EDD C-terminal domain-like"/>
    <property type="match status" value="1"/>
</dbReference>
<dbReference type="HAMAP" id="MF_00012">
    <property type="entry name" value="IlvD"/>
    <property type="match status" value="1"/>
</dbReference>
<dbReference type="InterPro" id="IPR042096">
    <property type="entry name" value="Dihydro-acid_dehy_C"/>
</dbReference>
<dbReference type="InterPro" id="IPR004404">
    <property type="entry name" value="DihydroxyA_deHydtase"/>
</dbReference>
<dbReference type="InterPro" id="IPR020558">
    <property type="entry name" value="DiOHA_6PGluconate_deHydtase_CS"/>
</dbReference>
<dbReference type="InterPro" id="IPR056740">
    <property type="entry name" value="ILV_EDD_C"/>
</dbReference>
<dbReference type="InterPro" id="IPR000581">
    <property type="entry name" value="ILV_EDD_N"/>
</dbReference>
<dbReference type="InterPro" id="IPR037237">
    <property type="entry name" value="IlvD/EDD_N"/>
</dbReference>
<dbReference type="NCBIfam" id="TIGR00110">
    <property type="entry name" value="ilvD"/>
    <property type="match status" value="1"/>
</dbReference>
<dbReference type="NCBIfam" id="NF002068">
    <property type="entry name" value="PRK00911.1"/>
    <property type="match status" value="1"/>
</dbReference>
<dbReference type="PANTHER" id="PTHR43661">
    <property type="entry name" value="D-XYLONATE DEHYDRATASE"/>
    <property type="match status" value="1"/>
</dbReference>
<dbReference type="PANTHER" id="PTHR43661:SF3">
    <property type="entry name" value="D-XYLONATE DEHYDRATASE YAGF-RELATED"/>
    <property type="match status" value="1"/>
</dbReference>
<dbReference type="Pfam" id="PF24877">
    <property type="entry name" value="ILV_EDD_C"/>
    <property type="match status" value="1"/>
</dbReference>
<dbReference type="Pfam" id="PF00920">
    <property type="entry name" value="ILVD_EDD_N"/>
    <property type="match status" value="1"/>
</dbReference>
<dbReference type="SUPFAM" id="SSF143975">
    <property type="entry name" value="IlvD/EDD N-terminal domain-like"/>
    <property type="match status" value="1"/>
</dbReference>
<dbReference type="SUPFAM" id="SSF52016">
    <property type="entry name" value="LeuD/IlvD-like"/>
    <property type="match status" value="1"/>
</dbReference>
<dbReference type="PROSITE" id="PS00886">
    <property type="entry name" value="ILVD_EDD_1"/>
    <property type="match status" value="1"/>
</dbReference>
<dbReference type="PROSITE" id="PS00887">
    <property type="entry name" value="ILVD_EDD_2"/>
    <property type="match status" value="1"/>
</dbReference>
<name>ILVD_PELPD</name>
<accession>A1AS43</accession>
<sequence>MRSDTITQGFERTPHRALLKGSGVPQSQMDKPFIGVATSFTDLIPGHVGMRDLERFIEKGVHTGGGHAFFFGLPGVCDGIAMGHKGMHYSLPTRELIADMVESVAEAHRLDGLVLLTNCDKITPGMLMAAARLDIPCIVVTAGPMMSGRGQEGRKFSFVTDTFEAMARYKAGVISERELMVCEENACPGIGSCQGLFTANTMAILTETMGMSLPRCGTALAVSALKRRIAFASGEKIVELVQNNITPRSILTREAFENAIRVDLALGGSSNTVLHLLAIANEAGVELPLETFDILAKETPQLASMNPAGEHFMEDLDVAGGVSGVMKQLGDKIKDTQTLFGLTTRQLAASVENVDETVIRPLTNPVKKEGGIAVLFGNIAPKGAVVKQSGVSDKMMKFEGTARCFDSEELAMAALMEGEIVAGNVVVIRYEGPKGGPGMREMLAPTAALMGLGLGDSVALITDGRFSGGTRGPCIGHISPEAAQGGPIGLIQDGDRISLDIPARRLELLVDEAVLQARAATWVAPPPKIAKGWLARYAKVVTSAHTGAVTTAE</sequence>